<dbReference type="EC" id="2.8.1.-" evidence="1"/>
<dbReference type="EMBL" id="CP000034">
    <property type="protein sequence ID" value="ABB63484.1"/>
    <property type="molecule type" value="Genomic_DNA"/>
</dbReference>
<dbReference type="RefSeq" id="WP_001209708.1">
    <property type="nucleotide sequence ID" value="NC_007606.1"/>
</dbReference>
<dbReference type="RefSeq" id="YP_404975.1">
    <property type="nucleotide sequence ID" value="NC_007606.1"/>
</dbReference>
<dbReference type="SMR" id="Q32B21"/>
<dbReference type="STRING" id="300267.SDY_3506"/>
<dbReference type="EnsemblBacteria" id="ABB63484">
    <property type="protein sequence ID" value="ABB63484"/>
    <property type="gene ID" value="SDY_3506"/>
</dbReference>
<dbReference type="KEGG" id="sdy:SDY_3506"/>
<dbReference type="PATRIC" id="fig|300267.13.peg.4160"/>
<dbReference type="HOGENOM" id="CLU_132095_0_0_6"/>
<dbReference type="Proteomes" id="UP000002716">
    <property type="component" value="Chromosome"/>
</dbReference>
<dbReference type="GO" id="GO:1990228">
    <property type="term" value="C:sulfurtransferase complex"/>
    <property type="evidence" value="ECO:0007669"/>
    <property type="project" value="TreeGrafter"/>
</dbReference>
<dbReference type="GO" id="GO:0097163">
    <property type="term" value="F:sulfur carrier activity"/>
    <property type="evidence" value="ECO:0007669"/>
    <property type="project" value="TreeGrafter"/>
</dbReference>
<dbReference type="GO" id="GO:0016783">
    <property type="term" value="F:sulfurtransferase activity"/>
    <property type="evidence" value="ECO:0007669"/>
    <property type="project" value="UniProtKB-UniRule"/>
</dbReference>
<dbReference type="GO" id="GO:0002143">
    <property type="term" value="P:tRNA wobble position uridine thiolation"/>
    <property type="evidence" value="ECO:0007669"/>
    <property type="project" value="TreeGrafter"/>
</dbReference>
<dbReference type="FunFam" id="3.40.1260.10:FF:000001">
    <property type="entry name" value="Sulfurtransferase TusD"/>
    <property type="match status" value="1"/>
</dbReference>
<dbReference type="Gene3D" id="3.40.1260.10">
    <property type="entry name" value="DsrEFH-like"/>
    <property type="match status" value="1"/>
</dbReference>
<dbReference type="HAMAP" id="MF_00390">
    <property type="entry name" value="Thiourid_synth_D"/>
    <property type="match status" value="1"/>
</dbReference>
<dbReference type="InterPro" id="IPR027396">
    <property type="entry name" value="DsrEFH-like"/>
</dbReference>
<dbReference type="InterPro" id="IPR003787">
    <property type="entry name" value="Sulphur_relay_DsrE/F-like"/>
</dbReference>
<dbReference type="InterPro" id="IPR017463">
    <property type="entry name" value="Sulphur_relay_TusD/DsrE"/>
</dbReference>
<dbReference type="NCBIfam" id="NF001237">
    <property type="entry name" value="PRK00207.1"/>
    <property type="match status" value="1"/>
</dbReference>
<dbReference type="NCBIfam" id="TIGR03012">
    <property type="entry name" value="sulf_tusD_dsrE"/>
    <property type="match status" value="1"/>
</dbReference>
<dbReference type="PANTHER" id="PTHR34874">
    <property type="entry name" value="PROTEIN YCHN"/>
    <property type="match status" value="1"/>
</dbReference>
<dbReference type="PANTHER" id="PTHR34874:SF3">
    <property type="entry name" value="SULFURTRANSFERASE TUSD"/>
    <property type="match status" value="1"/>
</dbReference>
<dbReference type="Pfam" id="PF02635">
    <property type="entry name" value="DsrE"/>
    <property type="match status" value="1"/>
</dbReference>
<dbReference type="SUPFAM" id="SSF75169">
    <property type="entry name" value="DsrEFH-like"/>
    <property type="match status" value="1"/>
</dbReference>
<keyword id="KW-0963">Cytoplasm</keyword>
<keyword id="KW-1185">Reference proteome</keyword>
<keyword id="KW-0808">Transferase</keyword>
<keyword id="KW-0819">tRNA processing</keyword>
<comment type="function">
    <text evidence="1">Part of a sulfur-relay system required for 2-thiolation of 5-methylaminomethyl-2-thiouridine (mnm(5)s(2)U) at tRNA wobble positions. Accepts sulfur from TusA and transfers it in turn to TusE.</text>
</comment>
<comment type="subunit">
    <text evidence="1">Heterohexamer, formed by a dimer of trimers. The hexameric TusBCD complex contains 2 copies each of TusB, TusC and TusD. The TusBCD complex interacts with TusE.</text>
</comment>
<comment type="subcellular location">
    <subcellularLocation>
        <location evidence="1">Cytoplasm</location>
    </subcellularLocation>
</comment>
<comment type="similarity">
    <text evidence="1">Belongs to the DsrE/TusD family.</text>
</comment>
<proteinExistence type="inferred from homology"/>
<accession>Q32B21</accession>
<reference key="1">
    <citation type="journal article" date="2005" name="Nucleic Acids Res.">
        <title>Genome dynamics and diversity of Shigella species, the etiologic agents of bacillary dysentery.</title>
        <authorList>
            <person name="Yang F."/>
            <person name="Yang J."/>
            <person name="Zhang X."/>
            <person name="Chen L."/>
            <person name="Jiang Y."/>
            <person name="Yan Y."/>
            <person name="Tang X."/>
            <person name="Wang J."/>
            <person name="Xiong Z."/>
            <person name="Dong J."/>
            <person name="Xue Y."/>
            <person name="Zhu Y."/>
            <person name="Xu X."/>
            <person name="Sun L."/>
            <person name="Chen S."/>
            <person name="Nie H."/>
            <person name="Peng J."/>
            <person name="Xu J."/>
            <person name="Wang Y."/>
            <person name="Yuan Z."/>
            <person name="Wen Y."/>
            <person name="Yao Z."/>
            <person name="Shen Y."/>
            <person name="Qiang B."/>
            <person name="Hou Y."/>
            <person name="Yu J."/>
            <person name="Jin Q."/>
        </authorList>
    </citation>
    <scope>NUCLEOTIDE SEQUENCE [LARGE SCALE GENOMIC DNA]</scope>
    <source>
        <strain>Sd197</strain>
    </source>
</reference>
<evidence type="ECO:0000255" key="1">
    <source>
        <dbReference type="HAMAP-Rule" id="MF_00390"/>
    </source>
</evidence>
<gene>
    <name evidence="1" type="primary">tusD</name>
    <name type="ordered locus">SDY_3506</name>
</gene>
<feature type="chain" id="PRO_0000234536" description="Sulfurtransferase TusD">
    <location>
        <begin position="1"/>
        <end position="128"/>
    </location>
</feature>
<feature type="active site" description="Cysteine persulfide intermediate" evidence="1">
    <location>
        <position position="78"/>
    </location>
</feature>
<organism>
    <name type="scientific">Shigella dysenteriae serotype 1 (strain Sd197)</name>
    <dbReference type="NCBI Taxonomy" id="300267"/>
    <lineage>
        <taxon>Bacteria</taxon>
        <taxon>Pseudomonadati</taxon>
        <taxon>Pseudomonadota</taxon>
        <taxon>Gammaproteobacteria</taxon>
        <taxon>Enterobacterales</taxon>
        <taxon>Enterobacteriaceae</taxon>
        <taxon>Shigella</taxon>
    </lineage>
</organism>
<sequence>MRFAIVVTGPAYGTQQASSAFQFAQALIAEGHKLSSVFFYREGVYNANQLTSPASDEFDLVRGWQQLNAQHGVALNICVAAALRRGVVDETEAGRLGLASSNLQQGFTLSGLGALAEASLTCDRVVQF</sequence>
<name>TUSD_SHIDS</name>
<protein>
    <recommendedName>
        <fullName evidence="1">Sulfurtransferase TusD</fullName>
        <ecNumber evidence="1">2.8.1.-</ecNumber>
    </recommendedName>
    <alternativeName>
        <fullName evidence="1">tRNA 2-thiouridine synthesizing protein D</fullName>
    </alternativeName>
</protein>